<dbReference type="EMBL" id="AE005176">
    <property type="protein sequence ID" value="AAK05117.1"/>
    <property type="molecule type" value="Genomic_DNA"/>
</dbReference>
<dbReference type="PIR" id="C86752">
    <property type="entry name" value="C86752"/>
</dbReference>
<dbReference type="RefSeq" id="NP_267175.1">
    <property type="nucleotide sequence ID" value="NC_002662.1"/>
</dbReference>
<dbReference type="SMR" id="Q9CGS5"/>
<dbReference type="PaxDb" id="272623-L0300"/>
<dbReference type="EnsemblBacteria" id="AAK05117">
    <property type="protein sequence ID" value="AAK05117"/>
    <property type="gene ID" value="L0300"/>
</dbReference>
<dbReference type="KEGG" id="lla:L0300"/>
<dbReference type="PATRIC" id="fig|272623.7.peg.1090"/>
<dbReference type="eggNOG" id="COG0629">
    <property type="taxonomic scope" value="Bacteria"/>
</dbReference>
<dbReference type="HOGENOM" id="CLU_078758_6_2_9"/>
<dbReference type="OrthoDB" id="9809878at2"/>
<dbReference type="Proteomes" id="UP000002196">
    <property type="component" value="Chromosome"/>
</dbReference>
<dbReference type="GO" id="GO:0009295">
    <property type="term" value="C:nucleoid"/>
    <property type="evidence" value="ECO:0007669"/>
    <property type="project" value="TreeGrafter"/>
</dbReference>
<dbReference type="GO" id="GO:0003697">
    <property type="term" value="F:single-stranded DNA binding"/>
    <property type="evidence" value="ECO:0007669"/>
    <property type="project" value="UniProtKB-UniRule"/>
</dbReference>
<dbReference type="GO" id="GO:0006310">
    <property type="term" value="P:DNA recombination"/>
    <property type="evidence" value="ECO:0007669"/>
    <property type="project" value="UniProtKB-UniRule"/>
</dbReference>
<dbReference type="GO" id="GO:0006281">
    <property type="term" value="P:DNA repair"/>
    <property type="evidence" value="ECO:0007669"/>
    <property type="project" value="UniProtKB-UniRule"/>
</dbReference>
<dbReference type="GO" id="GO:0006260">
    <property type="term" value="P:DNA replication"/>
    <property type="evidence" value="ECO:0007669"/>
    <property type="project" value="UniProtKB-UniRule"/>
</dbReference>
<dbReference type="CDD" id="cd04496">
    <property type="entry name" value="SSB_OBF"/>
    <property type="match status" value="1"/>
</dbReference>
<dbReference type="FunFam" id="2.40.50.140:FF:000084">
    <property type="entry name" value="Single-stranded DNA-binding protein"/>
    <property type="match status" value="1"/>
</dbReference>
<dbReference type="Gene3D" id="2.40.50.140">
    <property type="entry name" value="Nucleic acid-binding proteins"/>
    <property type="match status" value="1"/>
</dbReference>
<dbReference type="HAMAP" id="MF_00984">
    <property type="entry name" value="SSB"/>
    <property type="match status" value="1"/>
</dbReference>
<dbReference type="InterPro" id="IPR012340">
    <property type="entry name" value="NA-bd_OB-fold"/>
</dbReference>
<dbReference type="InterPro" id="IPR000424">
    <property type="entry name" value="Primosome_PriB/ssb"/>
</dbReference>
<dbReference type="InterPro" id="IPR011344">
    <property type="entry name" value="ssDNA-bd"/>
</dbReference>
<dbReference type="NCBIfam" id="TIGR00621">
    <property type="entry name" value="ssb"/>
    <property type="match status" value="1"/>
</dbReference>
<dbReference type="PANTHER" id="PTHR10302">
    <property type="entry name" value="SINGLE-STRANDED DNA-BINDING PROTEIN"/>
    <property type="match status" value="1"/>
</dbReference>
<dbReference type="PANTHER" id="PTHR10302:SF27">
    <property type="entry name" value="SINGLE-STRANDED DNA-BINDING PROTEIN"/>
    <property type="match status" value="1"/>
</dbReference>
<dbReference type="Pfam" id="PF00436">
    <property type="entry name" value="SSB"/>
    <property type="match status" value="1"/>
</dbReference>
<dbReference type="PIRSF" id="PIRSF002070">
    <property type="entry name" value="SSB"/>
    <property type="match status" value="1"/>
</dbReference>
<dbReference type="SUPFAM" id="SSF50249">
    <property type="entry name" value="Nucleic acid-binding proteins"/>
    <property type="match status" value="1"/>
</dbReference>
<dbReference type="PROSITE" id="PS50935">
    <property type="entry name" value="SSB"/>
    <property type="match status" value="1"/>
</dbReference>
<accession>Q9CGS5</accession>
<protein>
    <recommendedName>
        <fullName evidence="1">Single-stranded DNA-binding protein 1</fullName>
        <shortName evidence="1">SSB 1</shortName>
    </recommendedName>
</protein>
<feature type="chain" id="PRO_0000096052" description="Single-stranded DNA-binding protein 1">
    <location>
        <begin position="1"/>
        <end position="150"/>
    </location>
</feature>
<feature type="domain" description="SSB" evidence="1">
    <location>
        <begin position="1"/>
        <end position="104"/>
    </location>
</feature>
<feature type="region of interest" description="Disordered" evidence="2">
    <location>
        <begin position="103"/>
        <end position="150"/>
    </location>
</feature>
<feature type="short sequence motif" description="Important for interaction with partner proteins" evidence="1">
    <location>
        <begin position="145"/>
        <end position="150"/>
    </location>
</feature>
<feature type="compositionally biased region" description="Polar residues" evidence="2">
    <location>
        <begin position="103"/>
        <end position="120"/>
    </location>
</feature>
<feature type="compositionally biased region" description="Low complexity" evidence="2">
    <location>
        <begin position="121"/>
        <end position="138"/>
    </location>
</feature>
<sequence length="150" mass="16644">MINNVVLVGRLTRDPELRHTPQNQAVGTFGLAVNRQFKNANGEREADFINCVIWRQQAENLAKFAKKGALIGITGRIQTRNYENQQGQKVYVTEVVADTFQMLESNKTQGQQTSKPQAQNKKPQAPDPFKAPAADPFAGGTEISDDDLPF</sequence>
<organism>
    <name type="scientific">Lactococcus lactis subsp. lactis (strain IL1403)</name>
    <name type="common">Streptococcus lactis</name>
    <dbReference type="NCBI Taxonomy" id="272623"/>
    <lineage>
        <taxon>Bacteria</taxon>
        <taxon>Bacillati</taxon>
        <taxon>Bacillota</taxon>
        <taxon>Bacilli</taxon>
        <taxon>Lactobacillales</taxon>
        <taxon>Streptococcaceae</taxon>
        <taxon>Lactococcus</taxon>
    </lineage>
</organism>
<name>SSB1_LACLA</name>
<reference key="1">
    <citation type="journal article" date="2001" name="Genome Res.">
        <title>The complete genome sequence of the lactic acid bacterium Lactococcus lactis ssp. lactis IL1403.</title>
        <authorList>
            <person name="Bolotin A."/>
            <person name="Wincker P."/>
            <person name="Mauger S."/>
            <person name="Jaillon O."/>
            <person name="Malarme K."/>
            <person name="Weissenbach J."/>
            <person name="Ehrlich S.D."/>
            <person name="Sorokin A."/>
        </authorList>
    </citation>
    <scope>NUCLEOTIDE SEQUENCE [LARGE SCALE GENOMIC DNA]</scope>
    <source>
        <strain>IL1403</strain>
    </source>
</reference>
<proteinExistence type="inferred from homology"/>
<gene>
    <name type="primary">ssb1</name>
    <name type="ordered locus">LL1019</name>
    <name type="ORF">L0300</name>
</gene>
<evidence type="ECO:0000255" key="1">
    <source>
        <dbReference type="HAMAP-Rule" id="MF_00984"/>
    </source>
</evidence>
<evidence type="ECO:0000256" key="2">
    <source>
        <dbReference type="SAM" id="MobiDB-lite"/>
    </source>
</evidence>
<comment type="function">
    <text evidence="1">Plays an important role in DNA replication, recombination and repair. Binds to ssDNA and to an array of partner proteins to recruit them to their sites of action during DNA metabolism.</text>
</comment>
<comment type="subunit">
    <text evidence="1">Homotetramer.</text>
</comment>
<keyword id="KW-0227">DNA damage</keyword>
<keyword id="KW-0233">DNA recombination</keyword>
<keyword id="KW-0234">DNA repair</keyword>
<keyword id="KW-0235">DNA replication</keyword>
<keyword id="KW-0238">DNA-binding</keyword>
<keyword id="KW-1185">Reference proteome</keyword>